<proteinExistence type="predicted"/>
<evidence type="ECO:0000256" key="1">
    <source>
        <dbReference type="SAM" id="MobiDB-lite"/>
    </source>
</evidence>
<name>Y9172_DICDI</name>
<keyword id="KW-1185">Reference proteome</keyword>
<dbReference type="EMBL" id="AAFI02000019">
    <property type="protein sequence ID" value="EAL68766.1"/>
    <property type="molecule type" value="Genomic_DNA"/>
</dbReference>
<dbReference type="RefSeq" id="XP_642794.1">
    <property type="nucleotide sequence ID" value="XM_637702.1"/>
</dbReference>
<dbReference type="GlyGen" id="Q76P00">
    <property type="glycosylation" value="3 sites"/>
</dbReference>
<dbReference type="PaxDb" id="44689-DDB0169172"/>
<dbReference type="EnsemblProtists" id="EAL68766">
    <property type="protein sequence ID" value="EAL68766"/>
    <property type="gene ID" value="DDB_G0277161"/>
</dbReference>
<dbReference type="GeneID" id="8620987"/>
<dbReference type="KEGG" id="ddi:DDB_G0277161"/>
<dbReference type="dictyBase" id="DDB_G0277161"/>
<dbReference type="VEuPathDB" id="AmoebaDB:DDB_G0277161"/>
<dbReference type="HOGENOM" id="CLU_951320_0_0_1"/>
<dbReference type="InParanoid" id="Q76P00"/>
<dbReference type="PRO" id="PR:Q76P00"/>
<dbReference type="Proteomes" id="UP000002195">
    <property type="component" value="Chromosome 2"/>
</dbReference>
<feature type="chain" id="PRO_0000348177" description="Putative uncharacterized protein DDB_G0277161">
    <location>
        <begin position="1"/>
        <end position="293"/>
    </location>
</feature>
<feature type="region of interest" description="Disordered" evidence="1">
    <location>
        <begin position="121"/>
        <end position="154"/>
    </location>
</feature>
<feature type="region of interest" description="Disordered" evidence="1">
    <location>
        <begin position="254"/>
        <end position="274"/>
    </location>
</feature>
<feature type="compositionally biased region" description="Basic residues" evidence="1">
    <location>
        <begin position="133"/>
        <end position="149"/>
    </location>
</feature>
<feature type="compositionally biased region" description="Pro residues" evidence="1">
    <location>
        <begin position="260"/>
        <end position="272"/>
    </location>
</feature>
<sequence>MNNIDKIEKDIMYMNPIDSKFFFKPTVINDNNNNNNINNINNINNNYTKINNYNNLINTNINNKNNSNSNSVFSQPDQAATITNISNPCTLASPTPSSPSNNKLLMIQRDDMEKDINDYSNLNFDPHQMSKPSYHHHSHSHSHHSHSHSHSQNSHYLNNLQLQNLQNFQQQHQQKPISPPPSSLNIVVNRNRFFENSDPNFSYFSHNESNISDFFYNYVHYDHNFNFNENSFIFNTNNNNNNNNEINNSVIGNDILQTVPPSPTPTPPPPPQQQQFTQIKNTNYIFVPQQLKQ</sequence>
<accession>Q76P00</accession>
<accession>Q54ZS2</accession>
<organism>
    <name type="scientific">Dictyostelium discoideum</name>
    <name type="common">Social amoeba</name>
    <dbReference type="NCBI Taxonomy" id="44689"/>
    <lineage>
        <taxon>Eukaryota</taxon>
        <taxon>Amoebozoa</taxon>
        <taxon>Evosea</taxon>
        <taxon>Eumycetozoa</taxon>
        <taxon>Dictyostelia</taxon>
        <taxon>Dictyosteliales</taxon>
        <taxon>Dictyosteliaceae</taxon>
        <taxon>Dictyostelium</taxon>
    </lineage>
</organism>
<protein>
    <recommendedName>
        <fullName>Putative uncharacterized protein DDB_G0277161</fullName>
    </recommendedName>
</protein>
<gene>
    <name type="ORF">DDB_G0277161</name>
</gene>
<reference key="1">
    <citation type="journal article" date="2002" name="Nature">
        <title>Sequence and analysis of chromosome 2 of Dictyostelium discoideum.</title>
        <authorList>
            <person name="Gloeckner G."/>
            <person name="Eichinger L."/>
            <person name="Szafranski K."/>
            <person name="Pachebat J.A."/>
            <person name="Bankier A.T."/>
            <person name="Dear P.H."/>
            <person name="Lehmann R."/>
            <person name="Baumgart C."/>
            <person name="Parra G."/>
            <person name="Abril J.F."/>
            <person name="Guigo R."/>
            <person name="Kumpf K."/>
            <person name="Tunggal B."/>
            <person name="Cox E.C."/>
            <person name="Quail M.A."/>
            <person name="Platzer M."/>
            <person name="Rosenthal A."/>
            <person name="Noegel A.A."/>
        </authorList>
    </citation>
    <scope>NUCLEOTIDE SEQUENCE [LARGE SCALE GENOMIC DNA]</scope>
    <source>
        <strain>AX4</strain>
    </source>
</reference>
<reference key="2">
    <citation type="journal article" date="2005" name="Nature">
        <title>The genome of the social amoeba Dictyostelium discoideum.</title>
        <authorList>
            <person name="Eichinger L."/>
            <person name="Pachebat J.A."/>
            <person name="Gloeckner G."/>
            <person name="Rajandream M.A."/>
            <person name="Sucgang R."/>
            <person name="Berriman M."/>
            <person name="Song J."/>
            <person name="Olsen R."/>
            <person name="Szafranski K."/>
            <person name="Xu Q."/>
            <person name="Tunggal B."/>
            <person name="Kummerfeld S."/>
            <person name="Madera M."/>
            <person name="Konfortov B.A."/>
            <person name="Rivero F."/>
            <person name="Bankier A.T."/>
            <person name="Lehmann R."/>
            <person name="Hamlin N."/>
            <person name="Davies R."/>
            <person name="Gaudet P."/>
            <person name="Fey P."/>
            <person name="Pilcher K."/>
            <person name="Chen G."/>
            <person name="Saunders D."/>
            <person name="Sodergren E.J."/>
            <person name="Davis P."/>
            <person name="Kerhornou A."/>
            <person name="Nie X."/>
            <person name="Hall N."/>
            <person name="Anjard C."/>
            <person name="Hemphill L."/>
            <person name="Bason N."/>
            <person name="Farbrother P."/>
            <person name="Desany B."/>
            <person name="Just E."/>
            <person name="Morio T."/>
            <person name="Rost R."/>
            <person name="Churcher C.M."/>
            <person name="Cooper J."/>
            <person name="Haydock S."/>
            <person name="van Driessche N."/>
            <person name="Cronin A."/>
            <person name="Goodhead I."/>
            <person name="Muzny D.M."/>
            <person name="Mourier T."/>
            <person name="Pain A."/>
            <person name="Lu M."/>
            <person name="Harper D."/>
            <person name="Lindsay R."/>
            <person name="Hauser H."/>
            <person name="James K.D."/>
            <person name="Quiles M."/>
            <person name="Madan Babu M."/>
            <person name="Saito T."/>
            <person name="Buchrieser C."/>
            <person name="Wardroper A."/>
            <person name="Felder M."/>
            <person name="Thangavelu M."/>
            <person name="Johnson D."/>
            <person name="Knights A."/>
            <person name="Loulseged H."/>
            <person name="Mungall K.L."/>
            <person name="Oliver K."/>
            <person name="Price C."/>
            <person name="Quail M.A."/>
            <person name="Urushihara H."/>
            <person name="Hernandez J."/>
            <person name="Rabbinowitsch E."/>
            <person name="Steffen D."/>
            <person name="Sanders M."/>
            <person name="Ma J."/>
            <person name="Kohara Y."/>
            <person name="Sharp S."/>
            <person name="Simmonds M.N."/>
            <person name="Spiegler S."/>
            <person name="Tivey A."/>
            <person name="Sugano S."/>
            <person name="White B."/>
            <person name="Walker D."/>
            <person name="Woodward J.R."/>
            <person name="Winckler T."/>
            <person name="Tanaka Y."/>
            <person name="Shaulsky G."/>
            <person name="Schleicher M."/>
            <person name="Weinstock G.M."/>
            <person name="Rosenthal A."/>
            <person name="Cox E.C."/>
            <person name="Chisholm R.L."/>
            <person name="Gibbs R.A."/>
            <person name="Loomis W.F."/>
            <person name="Platzer M."/>
            <person name="Kay R.R."/>
            <person name="Williams J.G."/>
            <person name="Dear P.H."/>
            <person name="Noegel A.A."/>
            <person name="Barrell B.G."/>
            <person name="Kuspa A."/>
        </authorList>
    </citation>
    <scope>NUCLEOTIDE SEQUENCE [LARGE SCALE GENOMIC DNA]</scope>
    <source>
        <strain>AX4</strain>
    </source>
</reference>